<dbReference type="EC" id="2.3.1.48" evidence="2"/>
<dbReference type="EC" id="2.3.1.-" evidence="1 2"/>
<dbReference type="EMBL" id="CR382131">
    <property type="protein sequence ID" value="CAG79133.1"/>
    <property type="molecule type" value="Genomic_DNA"/>
</dbReference>
<dbReference type="RefSeq" id="XP_503552.1">
    <property type="nucleotide sequence ID" value="XM_503552.1"/>
</dbReference>
<dbReference type="SMR" id="Q6C710"/>
<dbReference type="FunCoup" id="Q6C710">
    <property type="interactions" value="994"/>
</dbReference>
<dbReference type="STRING" id="284591.Q6C710"/>
<dbReference type="EnsemblFungi" id="CAG79133">
    <property type="protein sequence ID" value="CAG79133"/>
    <property type="gene ID" value="YALI0_E04675g"/>
</dbReference>
<dbReference type="KEGG" id="yli:2912208"/>
<dbReference type="VEuPathDB" id="FungiDB:YALI0_E04675g"/>
<dbReference type="HOGENOM" id="CLU_011815_2_0_1"/>
<dbReference type="InParanoid" id="Q6C710"/>
<dbReference type="OMA" id="QYQRHGY"/>
<dbReference type="OrthoDB" id="120003at4891"/>
<dbReference type="Proteomes" id="UP000001300">
    <property type="component" value="Chromosome E"/>
</dbReference>
<dbReference type="GO" id="GO:0000785">
    <property type="term" value="C:chromatin"/>
    <property type="evidence" value="ECO:0000318"/>
    <property type="project" value="GO_Central"/>
</dbReference>
<dbReference type="GO" id="GO:0035267">
    <property type="term" value="C:NuA4 histone acetyltransferase complex"/>
    <property type="evidence" value="ECO:0007669"/>
    <property type="project" value="EnsemblFungi"/>
</dbReference>
<dbReference type="GO" id="GO:0005634">
    <property type="term" value="C:nucleus"/>
    <property type="evidence" value="ECO:0000318"/>
    <property type="project" value="GO_Central"/>
</dbReference>
<dbReference type="GO" id="GO:0005721">
    <property type="term" value="C:pericentric heterochromatin"/>
    <property type="evidence" value="ECO:0007669"/>
    <property type="project" value="EnsemblFungi"/>
</dbReference>
<dbReference type="GO" id="GO:0035861">
    <property type="term" value="C:site of double-strand break"/>
    <property type="evidence" value="ECO:0007669"/>
    <property type="project" value="EnsemblFungi"/>
</dbReference>
<dbReference type="GO" id="GO:0000812">
    <property type="term" value="C:Swr1 complex"/>
    <property type="evidence" value="ECO:0007669"/>
    <property type="project" value="EnsemblFungi"/>
</dbReference>
<dbReference type="GO" id="GO:0003682">
    <property type="term" value="F:chromatin binding"/>
    <property type="evidence" value="ECO:0000318"/>
    <property type="project" value="GO_Central"/>
</dbReference>
<dbReference type="GO" id="GO:0004402">
    <property type="term" value="F:histone acetyltransferase activity"/>
    <property type="evidence" value="ECO:0000318"/>
    <property type="project" value="GO_Central"/>
</dbReference>
<dbReference type="GO" id="GO:0044016">
    <property type="term" value="F:histone H3K4 acetyltransferase activity"/>
    <property type="evidence" value="ECO:0007669"/>
    <property type="project" value="EnsemblFungi"/>
</dbReference>
<dbReference type="GO" id="GO:0106226">
    <property type="term" value="F:peptide 2-hydroxyisobutyryltransferase activity"/>
    <property type="evidence" value="ECO:0007669"/>
    <property type="project" value="RHEA"/>
</dbReference>
<dbReference type="GO" id="GO:0140065">
    <property type="term" value="F:peptide butyryltransferase activity"/>
    <property type="evidence" value="ECO:0007669"/>
    <property type="project" value="EnsemblFungi"/>
</dbReference>
<dbReference type="GO" id="GO:0140064">
    <property type="term" value="F:peptide crotonyltransferase activity"/>
    <property type="evidence" value="ECO:0007669"/>
    <property type="project" value="RHEA"/>
</dbReference>
<dbReference type="GO" id="GO:0003712">
    <property type="term" value="F:transcription coregulator activity"/>
    <property type="evidence" value="ECO:0000318"/>
    <property type="project" value="GO_Central"/>
</dbReference>
<dbReference type="GO" id="GO:0006281">
    <property type="term" value="P:DNA repair"/>
    <property type="evidence" value="ECO:0007669"/>
    <property type="project" value="UniProtKB-KW"/>
</dbReference>
<dbReference type="GO" id="GO:0140861">
    <property type="term" value="P:DNA repair-dependent chromatin remodeling"/>
    <property type="evidence" value="ECO:0007669"/>
    <property type="project" value="EnsemblFungi"/>
</dbReference>
<dbReference type="GO" id="GO:0031453">
    <property type="term" value="P:positive regulation of heterochromatin formation"/>
    <property type="evidence" value="ECO:0007669"/>
    <property type="project" value="EnsemblFungi"/>
</dbReference>
<dbReference type="GO" id="GO:0006357">
    <property type="term" value="P:regulation of transcription by RNA polymerase II"/>
    <property type="evidence" value="ECO:0000318"/>
    <property type="project" value="GO_Central"/>
</dbReference>
<dbReference type="CDD" id="cd04301">
    <property type="entry name" value="NAT_SF"/>
    <property type="match status" value="1"/>
</dbReference>
<dbReference type="FunFam" id="1.10.10.10:FF:000526">
    <property type="entry name" value="Histone acetyltransferase"/>
    <property type="match status" value="1"/>
</dbReference>
<dbReference type="FunFam" id="3.30.60.60:FF:000009">
    <property type="entry name" value="Histone acetyltransferase"/>
    <property type="match status" value="1"/>
</dbReference>
<dbReference type="FunFam" id="3.40.630.30:FF:000002">
    <property type="entry name" value="Histone acetyltransferase"/>
    <property type="match status" value="1"/>
</dbReference>
<dbReference type="Gene3D" id="2.30.30.140">
    <property type="match status" value="1"/>
</dbReference>
<dbReference type="Gene3D" id="3.40.630.30">
    <property type="match status" value="1"/>
</dbReference>
<dbReference type="Gene3D" id="3.30.60.60">
    <property type="entry name" value="N-acetyl transferase-like"/>
    <property type="match status" value="1"/>
</dbReference>
<dbReference type="Gene3D" id="1.10.10.10">
    <property type="entry name" value="Winged helix-like DNA-binding domain superfamily/Winged helix DNA-binding domain"/>
    <property type="match status" value="1"/>
</dbReference>
<dbReference type="InterPro" id="IPR016181">
    <property type="entry name" value="Acyl_CoA_acyltransferase"/>
</dbReference>
<dbReference type="InterPro" id="IPR016197">
    <property type="entry name" value="Chromo-like_dom_sf"/>
</dbReference>
<dbReference type="InterPro" id="IPR002717">
    <property type="entry name" value="HAT_MYST-type"/>
</dbReference>
<dbReference type="InterPro" id="IPR050603">
    <property type="entry name" value="MYST_HAT"/>
</dbReference>
<dbReference type="InterPro" id="IPR025995">
    <property type="entry name" value="Tudor-knot"/>
</dbReference>
<dbReference type="InterPro" id="IPR036388">
    <property type="entry name" value="WH-like_DNA-bd_sf"/>
</dbReference>
<dbReference type="InterPro" id="IPR040706">
    <property type="entry name" value="Zf-MYST"/>
</dbReference>
<dbReference type="PANTHER" id="PTHR10615">
    <property type="entry name" value="HISTONE ACETYLTRANSFERASE"/>
    <property type="match status" value="1"/>
</dbReference>
<dbReference type="PANTHER" id="PTHR10615:SF218">
    <property type="entry name" value="HISTONE ACETYLTRANSFERASE ESA1"/>
    <property type="match status" value="1"/>
</dbReference>
<dbReference type="Pfam" id="PF01853">
    <property type="entry name" value="MOZ_SAS"/>
    <property type="match status" value="1"/>
</dbReference>
<dbReference type="Pfam" id="PF11717">
    <property type="entry name" value="Tudor-knot"/>
    <property type="match status" value="1"/>
</dbReference>
<dbReference type="Pfam" id="PF17772">
    <property type="entry name" value="zf-MYST"/>
    <property type="match status" value="1"/>
</dbReference>
<dbReference type="SUPFAM" id="SSF55729">
    <property type="entry name" value="Acyl-CoA N-acyltransferases (Nat)"/>
    <property type="match status" value="1"/>
</dbReference>
<dbReference type="SUPFAM" id="SSF54160">
    <property type="entry name" value="Chromo domain-like"/>
    <property type="match status" value="1"/>
</dbReference>
<dbReference type="PROSITE" id="PS51726">
    <property type="entry name" value="MYST_HAT"/>
    <property type="match status" value="1"/>
</dbReference>
<proteinExistence type="inferred from homology"/>
<comment type="function">
    <text evidence="1 2">Catalytic component of the NuA4 histone acetyltransferase (HAT) complex which is involved in epigenetic transcriptional activation of selected genes principally by acetylation of nucleosomal histones H4, H3, H2B, H2A and H2A variant H2A.Z (By similarity). Acetylates histone H4 to form H4K5ac, H4K8ac, H4K12ac and H4K16ac, histone H3 to form H3K14ac, and histone H2A to form H2AK4ac and H2AK7ac (By similarity). The NuA4 complex is involved in the DNA damage response and is required for chromosome segregation. The NuA4 complex plays a direct role in repair of DNA double-strand breaks (DSBs) through homologous recombination (By similarity). Recruitment to promoters depends on H3K4me. Also acetylates non-histone proteins (By similarity). In addition to protein acetyltransferase, can use different acyl-CoA substrates, such as 2-hydroxyisobutanoyl-CoA (2-hydroxyisobutyryl-CoA) or (2E)-butenoyl-CoA (crotonyl-CoA), and is able to mediate protein 2-hydroxyisobutyrylation and crotonylation, respectively (By similarity).</text>
</comment>
<comment type="catalytic activity">
    <reaction evidence="1">
        <text>L-lysyl-[histone] + acetyl-CoA = N(6)-acetyl-L-lysyl-[histone] + CoA + H(+)</text>
        <dbReference type="Rhea" id="RHEA:21992"/>
        <dbReference type="Rhea" id="RHEA-COMP:9845"/>
        <dbReference type="Rhea" id="RHEA-COMP:11338"/>
        <dbReference type="ChEBI" id="CHEBI:15378"/>
        <dbReference type="ChEBI" id="CHEBI:29969"/>
        <dbReference type="ChEBI" id="CHEBI:57287"/>
        <dbReference type="ChEBI" id="CHEBI:57288"/>
        <dbReference type="ChEBI" id="CHEBI:61930"/>
        <dbReference type="EC" id="2.3.1.48"/>
    </reaction>
    <physiologicalReaction direction="left-to-right" evidence="1">
        <dbReference type="Rhea" id="RHEA:21993"/>
    </physiologicalReaction>
</comment>
<comment type="catalytic activity">
    <reaction evidence="2">
        <text>L-lysyl-[protein] + acetyl-CoA = N(6)-acetyl-L-lysyl-[protein] + CoA + H(+)</text>
        <dbReference type="Rhea" id="RHEA:45948"/>
        <dbReference type="Rhea" id="RHEA-COMP:9752"/>
        <dbReference type="Rhea" id="RHEA-COMP:10731"/>
        <dbReference type="ChEBI" id="CHEBI:15378"/>
        <dbReference type="ChEBI" id="CHEBI:29969"/>
        <dbReference type="ChEBI" id="CHEBI:57287"/>
        <dbReference type="ChEBI" id="CHEBI:57288"/>
        <dbReference type="ChEBI" id="CHEBI:61930"/>
    </reaction>
    <physiologicalReaction direction="left-to-right" evidence="2">
        <dbReference type="Rhea" id="RHEA:45949"/>
    </physiologicalReaction>
</comment>
<comment type="catalytic activity">
    <reaction evidence="1">
        <text>2-hydroxyisobutanoyl-CoA + L-lysyl-[protein] = N(6)-(2-hydroxyisobutanoyl)-L-lysyl-[protein] + CoA + H(+)</text>
        <dbReference type="Rhea" id="RHEA:24180"/>
        <dbReference type="Rhea" id="RHEA-COMP:9752"/>
        <dbReference type="Rhea" id="RHEA-COMP:15921"/>
        <dbReference type="ChEBI" id="CHEBI:15378"/>
        <dbReference type="ChEBI" id="CHEBI:29969"/>
        <dbReference type="ChEBI" id="CHEBI:57287"/>
        <dbReference type="ChEBI" id="CHEBI:131780"/>
        <dbReference type="ChEBI" id="CHEBI:144968"/>
    </reaction>
    <physiologicalReaction direction="left-to-right" evidence="1">
        <dbReference type="Rhea" id="RHEA:24181"/>
    </physiologicalReaction>
</comment>
<comment type="catalytic activity">
    <reaction evidence="2">
        <text>(2E)-butenoyl-CoA + L-lysyl-[protein] = N(6)-(2E)-butenoyl-L-lysyl-[protein] + CoA + H(+)</text>
        <dbReference type="Rhea" id="RHEA:53908"/>
        <dbReference type="Rhea" id="RHEA-COMP:9752"/>
        <dbReference type="Rhea" id="RHEA-COMP:13707"/>
        <dbReference type="ChEBI" id="CHEBI:15378"/>
        <dbReference type="ChEBI" id="CHEBI:29969"/>
        <dbReference type="ChEBI" id="CHEBI:57287"/>
        <dbReference type="ChEBI" id="CHEBI:57332"/>
        <dbReference type="ChEBI" id="CHEBI:137954"/>
    </reaction>
    <physiologicalReaction direction="left-to-right" evidence="2">
        <dbReference type="Rhea" id="RHEA:53909"/>
    </physiologicalReaction>
</comment>
<comment type="subunit">
    <text evidence="2">Component of the NuA4 histone acetyltransferase complex.</text>
</comment>
<comment type="subcellular location">
    <subcellularLocation>
        <location evidence="1">Nucleus</location>
    </subcellularLocation>
    <subcellularLocation>
        <location evidence="1">Chromosome</location>
    </subcellularLocation>
    <text evidence="1">Following DNA damage, localizes to sites of DNA damage, such as double stand breaks (DSBs).</text>
</comment>
<comment type="PTM">
    <text evidence="2">Autoacetylation at Lys-285 is required for proper function.</text>
</comment>
<comment type="similarity">
    <text evidence="6">Belongs to the MYST (SAS/MOZ) family.</text>
</comment>
<feature type="chain" id="PRO_0000051561" description="Histone acetyltransferase ESA1">
    <location>
        <begin position="1"/>
        <end position="469"/>
    </location>
</feature>
<feature type="domain" description="Tudor-knot" evidence="3">
    <location>
        <begin position="39"/>
        <end position="92"/>
    </location>
</feature>
<feature type="domain" description="MYST-type HAT" evidence="4">
    <location>
        <begin position="185"/>
        <end position="457"/>
    </location>
</feature>
<feature type="zinc finger region" description="C2HC MYST-type; degenerate" evidence="4">
    <location>
        <begin position="218"/>
        <end position="243"/>
    </location>
</feature>
<feature type="region of interest" description="Disordered" evidence="5">
    <location>
        <begin position="1"/>
        <end position="26"/>
    </location>
</feature>
<feature type="region of interest" description="Disordered" evidence="5">
    <location>
        <begin position="98"/>
        <end position="163"/>
    </location>
</feature>
<feature type="compositionally biased region" description="Polar residues" evidence="5">
    <location>
        <begin position="11"/>
        <end position="21"/>
    </location>
</feature>
<feature type="compositionally biased region" description="Basic residues" evidence="5">
    <location>
        <begin position="118"/>
        <end position="127"/>
    </location>
</feature>
<feature type="compositionally biased region" description="Polar residues" evidence="5">
    <location>
        <begin position="130"/>
        <end position="139"/>
    </location>
</feature>
<feature type="compositionally biased region" description="Polar residues" evidence="5">
    <location>
        <begin position="150"/>
        <end position="160"/>
    </location>
</feature>
<feature type="active site" description="Proton donor/acceptor" evidence="2">
    <location>
        <position position="361"/>
    </location>
</feature>
<feature type="binding site" evidence="2">
    <location>
        <begin position="326"/>
        <end position="330"/>
    </location>
    <ligand>
        <name>acetyl-CoA</name>
        <dbReference type="ChEBI" id="CHEBI:57288"/>
    </ligand>
</feature>
<feature type="binding site" evidence="2">
    <location>
        <begin position="335"/>
        <end position="341"/>
    </location>
    <ligand>
        <name>acetyl-CoA</name>
        <dbReference type="ChEBI" id="CHEBI:57288"/>
    </ligand>
</feature>
<feature type="binding site" evidence="2">
    <location>
        <position position="365"/>
    </location>
    <ligand>
        <name>acetyl-CoA</name>
        <dbReference type="ChEBI" id="CHEBI:57288"/>
    </ligand>
</feature>
<feature type="site" description="Important for catalytic activity" evidence="2">
    <location>
        <position position="327"/>
    </location>
</feature>
<feature type="modified residue" description="N6-acetyllysine; by autocatalysis" evidence="2">
    <location>
        <position position="285"/>
    </location>
</feature>
<gene>
    <name type="primary">ESA1</name>
    <name type="ordered locus">YALI0E04675g</name>
</gene>
<reference key="1">
    <citation type="journal article" date="2004" name="Nature">
        <title>Genome evolution in yeasts.</title>
        <authorList>
            <person name="Dujon B."/>
            <person name="Sherman D."/>
            <person name="Fischer G."/>
            <person name="Durrens P."/>
            <person name="Casaregola S."/>
            <person name="Lafontaine I."/>
            <person name="de Montigny J."/>
            <person name="Marck C."/>
            <person name="Neuveglise C."/>
            <person name="Talla E."/>
            <person name="Goffard N."/>
            <person name="Frangeul L."/>
            <person name="Aigle M."/>
            <person name="Anthouard V."/>
            <person name="Babour A."/>
            <person name="Barbe V."/>
            <person name="Barnay S."/>
            <person name="Blanchin S."/>
            <person name="Beckerich J.-M."/>
            <person name="Beyne E."/>
            <person name="Bleykasten C."/>
            <person name="Boisrame A."/>
            <person name="Boyer J."/>
            <person name="Cattolico L."/>
            <person name="Confanioleri F."/>
            <person name="de Daruvar A."/>
            <person name="Despons L."/>
            <person name="Fabre E."/>
            <person name="Fairhead C."/>
            <person name="Ferry-Dumazet H."/>
            <person name="Groppi A."/>
            <person name="Hantraye F."/>
            <person name="Hennequin C."/>
            <person name="Jauniaux N."/>
            <person name="Joyet P."/>
            <person name="Kachouri R."/>
            <person name="Kerrest A."/>
            <person name="Koszul R."/>
            <person name="Lemaire M."/>
            <person name="Lesur I."/>
            <person name="Ma L."/>
            <person name="Muller H."/>
            <person name="Nicaud J.-M."/>
            <person name="Nikolski M."/>
            <person name="Oztas S."/>
            <person name="Ozier-Kalogeropoulos O."/>
            <person name="Pellenz S."/>
            <person name="Potier S."/>
            <person name="Richard G.-F."/>
            <person name="Straub M.-L."/>
            <person name="Suleau A."/>
            <person name="Swennen D."/>
            <person name="Tekaia F."/>
            <person name="Wesolowski-Louvel M."/>
            <person name="Westhof E."/>
            <person name="Wirth B."/>
            <person name="Zeniou-Meyer M."/>
            <person name="Zivanovic Y."/>
            <person name="Bolotin-Fukuhara M."/>
            <person name="Thierry A."/>
            <person name="Bouchier C."/>
            <person name="Caudron B."/>
            <person name="Scarpelli C."/>
            <person name="Gaillardin C."/>
            <person name="Weissenbach J."/>
            <person name="Wincker P."/>
            <person name="Souciet J.-L."/>
        </authorList>
    </citation>
    <scope>NUCLEOTIDE SEQUENCE [LARGE SCALE GENOMIC DNA]</scope>
    <source>
        <strain>CLIB 122 / E 150</strain>
    </source>
</reference>
<accession>Q6C710</accession>
<organism>
    <name type="scientific">Yarrowia lipolytica (strain CLIB 122 / E 150)</name>
    <name type="common">Yeast</name>
    <name type="synonym">Candida lipolytica</name>
    <dbReference type="NCBI Taxonomy" id="284591"/>
    <lineage>
        <taxon>Eukaryota</taxon>
        <taxon>Fungi</taxon>
        <taxon>Dikarya</taxon>
        <taxon>Ascomycota</taxon>
        <taxon>Saccharomycotina</taxon>
        <taxon>Dipodascomycetes</taxon>
        <taxon>Dipodascales</taxon>
        <taxon>Dipodascales incertae sedis</taxon>
        <taxon>Yarrowia</taxon>
    </lineage>
</organism>
<sequence length="469" mass="53908">MALAEADLPNGKTNGKASGSEETPAPVQKVDMNVAINELRVGCKVHVEKDGEDRVAEILSVQMRRGNLEFYVHYVEFNKRLDERIAATRVDLSQGVIWPEPEKPKKPLSGAAKESSKEKKKNPSKKQKLTDSAATTPGANSEDVMDLDNLQVNGTTQDPDNFNRDEEIEKLRTGGSMTQSSHEVARVRNLQRIVLGNHVIEPWYFSPYPIELTEEDEIYICDFTLCYFGSKKQFERFRSKSTLRHPPGNEIYRDEAVSFFEIDGRKQRTWCRNLCLLSKLFLDHKTLYYDVDPFLFYCMTRRDEKGHHLVGYFSKEKESAEGYNVACILTLPQYQRHGYGRLLIDFSYALSKAEGKTGSPEKPLSDLGLLSYRAYWADTIIELLMEKGKQEMTIEDIASVTAMTTTDVLHTLQTYNMLKYYKGQHIICLTDSVCEKYEKMLKKRRRKVNSELLKWKPPVFTAAQLRFAW</sequence>
<protein>
    <recommendedName>
        <fullName>Histone acetyltransferase ESA1</fullName>
        <ecNumber evidence="2">2.3.1.48</ecNumber>
    </recommendedName>
    <alternativeName>
        <fullName evidence="6">Protein 2-hydroxyisobutyryltransferase ESA1</fullName>
        <ecNumber evidence="1">2.3.1.-</ecNumber>
    </alternativeName>
    <alternativeName>
        <fullName evidence="6">Protein acetyltransferase ESA1</fullName>
        <ecNumber evidence="2">2.3.1.-</ecNumber>
    </alternativeName>
    <alternativeName>
        <fullName evidence="6">Protein crotonyltransferase ESA1</fullName>
        <ecNumber evidence="2">2.3.1.-</ecNumber>
    </alternativeName>
</protein>
<name>ESA1_YARLI</name>
<keyword id="KW-0007">Acetylation</keyword>
<keyword id="KW-0010">Activator</keyword>
<keyword id="KW-0156">Chromatin regulator</keyword>
<keyword id="KW-0158">Chromosome</keyword>
<keyword id="KW-0227">DNA damage</keyword>
<keyword id="KW-0234">DNA repair</keyword>
<keyword id="KW-0539">Nucleus</keyword>
<keyword id="KW-1185">Reference proteome</keyword>
<keyword id="KW-0804">Transcription</keyword>
<keyword id="KW-0805">Transcription regulation</keyword>
<keyword id="KW-0808">Transferase</keyword>
<evidence type="ECO:0000250" key="1">
    <source>
        <dbReference type="UniProtKB" id="O94446"/>
    </source>
</evidence>
<evidence type="ECO:0000250" key="2">
    <source>
        <dbReference type="UniProtKB" id="Q08649"/>
    </source>
</evidence>
<evidence type="ECO:0000255" key="3"/>
<evidence type="ECO:0000255" key="4">
    <source>
        <dbReference type="PROSITE-ProRule" id="PRU01063"/>
    </source>
</evidence>
<evidence type="ECO:0000256" key="5">
    <source>
        <dbReference type="SAM" id="MobiDB-lite"/>
    </source>
</evidence>
<evidence type="ECO:0000305" key="6"/>